<gene>
    <name evidence="1" type="primary">nusB</name>
    <name type="ordered locus">CV_2391</name>
</gene>
<comment type="function">
    <text evidence="1">Involved in transcription antitermination. Required for transcription of ribosomal RNA (rRNA) genes. Binds specifically to the boxA antiterminator sequence of the ribosomal RNA (rrn) operons.</text>
</comment>
<comment type="similarity">
    <text evidence="1">Belongs to the NusB family.</text>
</comment>
<keyword id="KW-1185">Reference proteome</keyword>
<keyword id="KW-0694">RNA-binding</keyword>
<keyword id="KW-0804">Transcription</keyword>
<keyword id="KW-0889">Transcription antitermination</keyword>
<keyword id="KW-0805">Transcription regulation</keyword>
<accession>Q7NVF2</accession>
<evidence type="ECO:0000255" key="1">
    <source>
        <dbReference type="HAMAP-Rule" id="MF_00073"/>
    </source>
</evidence>
<feature type="chain" id="PRO_0000176528" description="Transcription antitermination protein NusB">
    <location>
        <begin position="1"/>
        <end position="149"/>
    </location>
</feature>
<dbReference type="EMBL" id="AE016825">
    <property type="protein sequence ID" value="AAQ60063.1"/>
    <property type="molecule type" value="Genomic_DNA"/>
</dbReference>
<dbReference type="RefSeq" id="WP_011135938.1">
    <property type="nucleotide sequence ID" value="NC_005085.1"/>
</dbReference>
<dbReference type="SMR" id="Q7NVF2"/>
<dbReference type="STRING" id="243365.CV_2391"/>
<dbReference type="GeneID" id="68840090"/>
<dbReference type="KEGG" id="cvi:CV_2391"/>
<dbReference type="eggNOG" id="COG0781">
    <property type="taxonomic scope" value="Bacteria"/>
</dbReference>
<dbReference type="HOGENOM" id="CLU_087843_4_1_4"/>
<dbReference type="OrthoDB" id="9789556at2"/>
<dbReference type="Proteomes" id="UP000001424">
    <property type="component" value="Chromosome"/>
</dbReference>
<dbReference type="GO" id="GO:0005829">
    <property type="term" value="C:cytosol"/>
    <property type="evidence" value="ECO:0007669"/>
    <property type="project" value="TreeGrafter"/>
</dbReference>
<dbReference type="GO" id="GO:0003723">
    <property type="term" value="F:RNA binding"/>
    <property type="evidence" value="ECO:0007669"/>
    <property type="project" value="UniProtKB-UniRule"/>
</dbReference>
<dbReference type="GO" id="GO:0006353">
    <property type="term" value="P:DNA-templated transcription termination"/>
    <property type="evidence" value="ECO:0007669"/>
    <property type="project" value="UniProtKB-UniRule"/>
</dbReference>
<dbReference type="GO" id="GO:0031564">
    <property type="term" value="P:transcription antitermination"/>
    <property type="evidence" value="ECO:0007669"/>
    <property type="project" value="UniProtKB-KW"/>
</dbReference>
<dbReference type="Gene3D" id="1.10.940.10">
    <property type="entry name" value="NusB-like"/>
    <property type="match status" value="1"/>
</dbReference>
<dbReference type="HAMAP" id="MF_00073">
    <property type="entry name" value="NusB"/>
    <property type="match status" value="1"/>
</dbReference>
<dbReference type="InterPro" id="IPR035926">
    <property type="entry name" value="NusB-like_sf"/>
</dbReference>
<dbReference type="InterPro" id="IPR011605">
    <property type="entry name" value="NusB_fam"/>
</dbReference>
<dbReference type="InterPro" id="IPR006027">
    <property type="entry name" value="NusB_RsmB_TIM44"/>
</dbReference>
<dbReference type="NCBIfam" id="TIGR01951">
    <property type="entry name" value="nusB"/>
    <property type="match status" value="1"/>
</dbReference>
<dbReference type="PANTHER" id="PTHR11078:SF3">
    <property type="entry name" value="ANTITERMINATION NUSB DOMAIN-CONTAINING PROTEIN"/>
    <property type="match status" value="1"/>
</dbReference>
<dbReference type="PANTHER" id="PTHR11078">
    <property type="entry name" value="N UTILIZATION SUBSTANCE PROTEIN B-RELATED"/>
    <property type="match status" value="1"/>
</dbReference>
<dbReference type="Pfam" id="PF01029">
    <property type="entry name" value="NusB"/>
    <property type="match status" value="1"/>
</dbReference>
<dbReference type="SUPFAM" id="SSF48013">
    <property type="entry name" value="NusB-like"/>
    <property type="match status" value="1"/>
</dbReference>
<sequence length="149" mass="17007">MKTARRRAREFAVQGIYEWELNPDRPASLIEKHLRENEYFAKADEALFRSILYGVLKDVELLSAQVGRYYERAEDEVSPVERAVLLMAALELTQSPETPYPVIINEAIEITKTFGGTDGHKFVNGVLDKLAAEVRGDEVLAQKQRRKQD</sequence>
<name>NUSB_CHRVO</name>
<organism>
    <name type="scientific">Chromobacterium violaceum (strain ATCC 12472 / DSM 30191 / JCM 1249 / CCUG 213 / NBRC 12614 / NCIMB 9131 / NCTC 9757 / MK)</name>
    <dbReference type="NCBI Taxonomy" id="243365"/>
    <lineage>
        <taxon>Bacteria</taxon>
        <taxon>Pseudomonadati</taxon>
        <taxon>Pseudomonadota</taxon>
        <taxon>Betaproteobacteria</taxon>
        <taxon>Neisseriales</taxon>
        <taxon>Chromobacteriaceae</taxon>
        <taxon>Chromobacterium</taxon>
    </lineage>
</organism>
<protein>
    <recommendedName>
        <fullName evidence="1">Transcription antitermination protein NusB</fullName>
    </recommendedName>
    <alternativeName>
        <fullName evidence="1">Antitermination factor NusB</fullName>
    </alternativeName>
</protein>
<proteinExistence type="inferred from homology"/>
<reference key="1">
    <citation type="journal article" date="2003" name="Proc. Natl. Acad. Sci. U.S.A.">
        <title>The complete genome sequence of Chromobacterium violaceum reveals remarkable and exploitable bacterial adaptability.</title>
        <authorList>
            <person name="Vasconcelos A.T.R."/>
            <person name="de Almeida D.F."/>
            <person name="Hungria M."/>
            <person name="Guimaraes C.T."/>
            <person name="Antonio R.V."/>
            <person name="Almeida F.C."/>
            <person name="de Almeida L.G.P."/>
            <person name="de Almeida R."/>
            <person name="Alves-Gomes J.A."/>
            <person name="Andrade E.M."/>
            <person name="Araripe J."/>
            <person name="de Araujo M.F.F."/>
            <person name="Astolfi-Filho S."/>
            <person name="Azevedo V."/>
            <person name="Baptista A.J."/>
            <person name="Bataus L.A.M."/>
            <person name="Batista J.S."/>
            <person name="Belo A."/>
            <person name="van den Berg C."/>
            <person name="Bogo M."/>
            <person name="Bonatto S."/>
            <person name="Bordignon J."/>
            <person name="Brigido M.M."/>
            <person name="Brito C.A."/>
            <person name="Brocchi M."/>
            <person name="Burity H.A."/>
            <person name="Camargo A.A."/>
            <person name="Cardoso D.D.P."/>
            <person name="Carneiro N.P."/>
            <person name="Carraro D.M."/>
            <person name="Carvalho C.M.B."/>
            <person name="Cascardo J.C.M."/>
            <person name="Cavada B.S."/>
            <person name="Chueire L.M.O."/>
            <person name="Creczynski-Pasa T.B."/>
            <person name="Cunha-Junior N.C."/>
            <person name="Fagundes N."/>
            <person name="Falcao C.L."/>
            <person name="Fantinatti F."/>
            <person name="Farias I.P."/>
            <person name="Felipe M.S.S."/>
            <person name="Ferrari L.P."/>
            <person name="Ferro J.A."/>
            <person name="Ferro M.I.T."/>
            <person name="Franco G.R."/>
            <person name="Freitas N.S.A."/>
            <person name="Furlan L.R."/>
            <person name="Gazzinelli R.T."/>
            <person name="Gomes E.A."/>
            <person name="Goncalves P.R."/>
            <person name="Grangeiro T.B."/>
            <person name="Grattapaglia D."/>
            <person name="Grisard E.C."/>
            <person name="Hanna E.S."/>
            <person name="Jardim S.N."/>
            <person name="Laurino J."/>
            <person name="Leoi L.C.T."/>
            <person name="Lima L.F.A."/>
            <person name="Loureiro M.F."/>
            <person name="Lyra M.C.C.P."/>
            <person name="Madeira H.M.F."/>
            <person name="Manfio G.P."/>
            <person name="Maranhao A.Q."/>
            <person name="Martins W.S."/>
            <person name="di Mauro S.M.Z."/>
            <person name="de Medeiros S.R.B."/>
            <person name="Meissner R.V."/>
            <person name="Moreira M.A.M."/>
            <person name="Nascimento F.F."/>
            <person name="Nicolas M.F."/>
            <person name="Oliveira J.G."/>
            <person name="Oliveira S.C."/>
            <person name="Paixao R.F.C."/>
            <person name="Parente J.A."/>
            <person name="Pedrosa F.O."/>
            <person name="Pena S.D.J."/>
            <person name="Pereira J.O."/>
            <person name="Pereira M."/>
            <person name="Pinto L.S.R.C."/>
            <person name="Pinto L.S."/>
            <person name="Porto J.I.R."/>
            <person name="Potrich D.P."/>
            <person name="Ramalho-Neto C.E."/>
            <person name="Reis A.M.M."/>
            <person name="Rigo L.U."/>
            <person name="Rondinelli E."/>
            <person name="Santos E.B.P."/>
            <person name="Santos F.R."/>
            <person name="Schneider M.P.C."/>
            <person name="Seuanez H.N."/>
            <person name="Silva A.M.R."/>
            <person name="da Silva A.L.C."/>
            <person name="Silva D.W."/>
            <person name="Silva R."/>
            <person name="Simoes I.C."/>
            <person name="Simon D."/>
            <person name="Soares C.M.A."/>
            <person name="Soares R.B.A."/>
            <person name="Souza E.M."/>
            <person name="Souza K.R.L."/>
            <person name="Souza R.C."/>
            <person name="Steffens M.B.R."/>
            <person name="Steindel M."/>
            <person name="Teixeira S.R."/>
            <person name="Urmenyi T."/>
            <person name="Vettore A."/>
            <person name="Wassem R."/>
            <person name="Zaha A."/>
            <person name="Simpson A.J.G."/>
        </authorList>
    </citation>
    <scope>NUCLEOTIDE SEQUENCE [LARGE SCALE GENOMIC DNA]</scope>
    <source>
        <strain>ATCC 12472 / DSM 30191 / JCM 1249 / CCUG 213 / NBRC 12614 / NCIMB 9131 / NCTC 9757 / MK</strain>
    </source>
</reference>